<comment type="function">
    <text evidence="3">Non-alpha subunit of nicotinic acetylcholine receptor (nAChR). Involved in nAChR sensitivity to nicotine and levasimole.</text>
</comment>
<comment type="subunit">
    <text evidence="3 4 5">Interacts with lev-1 (PubMed:15990870). Component of nicotinic acetylcholine receptor composed of 2 non-alpha subunits lev-1 and unc-29, and 3 alpha subunits unc-38, unc-63 and lev-8 (PubMed:15990870). Interacts with oig-4 (PubMed:21252855). Interacts with crld-1 (PubMed:30407909).</text>
</comment>
<comment type="subcellular location">
    <subcellularLocation>
        <location evidence="3">Postsynaptic cell membrane</location>
        <topology evidence="2">Multi-pass membrane protein</topology>
    </subcellularLocation>
    <subcellularLocation>
        <location evidence="3">Cell membrane</location>
        <topology evidence="2">Multi-pass membrane protein</topology>
    </subcellularLocation>
    <text evidence="3">Co-localizes with unc-38 and lev-1 at nerve cord synapses.</text>
</comment>
<comment type="disruption phenotype">
    <text evidence="3">RNAi-mediated knockdown causes a resistance to nicotine-mediated paralysis and small impairment in mobility.</text>
</comment>
<comment type="similarity">
    <text evidence="6">Belongs to the ligand-gated ion channel (TC 1.A.9) family. Acetylcholine receptor (TC 1.A.9.1) subfamily.</text>
</comment>
<name>ACH2_CAEEL</name>
<sequence>MRTNRLSWILVLSVVIFLVIINTINASDDEERLMVDVFRGYNSLIQPVRNSSELPLIVKMALQLVLLINVDEKDQVMHTNVWLTLQWHDFQMKWNPVNYGEIKQIRVSPDKVWLPDIVLFNNADGNYEVSFMCNVVINHKGDMLWVPPAIYKSSCIIDVEFFPFDEQVCTLVFGSWTYNENEIKLEFVQAELVDVSEYSASSIWDVIDVPASLVNKRSRIEFQVRIRRKTLFYTVVLIIPTVLMAFLSMAVFFLPTDSGEKITLTISVLLSIVVFLLLVSKILPPTSSTIPLMAKYLLLTFVLNVITILVTVIIINVYFRGPRTHRMPQWVRVVFLQFLPKLVCMKRPKSASERSAVRSGMAQLPGVGQFTLSPSAHHPLCPSADDRTTTIRNTASNETSAYYPLSTDALRAIDAIEYITEHLKRDEQHKSFRDDWKYVAMIIDRLLLYVFFGITVGGTCGILFSAPHVFQRIDQQEMLDRLKEKYDTASNIP</sequence>
<gene>
    <name evidence="7" type="primary">unc-29</name>
    <name evidence="7" type="ORF">T08G11.5</name>
</gene>
<accession>P48181</accession>
<accession>O02520</accession>
<accession>O02600</accession>
<accession>Q94014</accession>
<dbReference type="EMBL" id="X83888">
    <property type="protein sequence ID" value="CAA58765.1"/>
    <property type="molecule type" value="mRNA"/>
</dbReference>
<dbReference type="EMBL" id="U81144">
    <property type="protein sequence ID" value="AAB39358.1"/>
    <property type="molecule type" value="Genomic_DNA"/>
</dbReference>
<dbReference type="EMBL" id="BX284601">
    <property type="protein sequence ID" value="CAB02308.1"/>
    <property type="molecule type" value="Genomic_DNA"/>
</dbReference>
<dbReference type="PIR" id="S68587">
    <property type="entry name" value="S68587"/>
</dbReference>
<dbReference type="PIR" id="T24695">
    <property type="entry name" value="T24695"/>
</dbReference>
<dbReference type="RefSeq" id="NP_492399.1">
    <property type="nucleotide sequence ID" value="NM_059998.7"/>
</dbReference>
<dbReference type="SMR" id="P48181"/>
<dbReference type="BioGRID" id="38136">
    <property type="interactions" value="159"/>
</dbReference>
<dbReference type="FunCoup" id="P48181">
    <property type="interactions" value="9"/>
</dbReference>
<dbReference type="IntAct" id="P48181">
    <property type="interactions" value="139"/>
</dbReference>
<dbReference type="MINT" id="P48181"/>
<dbReference type="STRING" id="6239.T08G11.5.2"/>
<dbReference type="DrugBank" id="DB00848">
    <property type="generic name" value="Levamisole"/>
</dbReference>
<dbReference type="TCDB" id="1.A.9.1.16">
    <property type="family name" value="the neurotransmitter receptor, cys loop, ligand-gated ion channel (lic) family"/>
</dbReference>
<dbReference type="GlyCosmos" id="P48181">
    <property type="glycosylation" value="2 sites, No reported glycans"/>
</dbReference>
<dbReference type="PaxDb" id="6239-T08G11.5.2"/>
<dbReference type="EnsemblMetazoa" id="T08G11.5.1">
    <property type="protein sequence ID" value="T08G11.5.1"/>
    <property type="gene ID" value="WBGene00006765"/>
</dbReference>
<dbReference type="GeneID" id="172703"/>
<dbReference type="KEGG" id="cel:CELE_T08G11.5"/>
<dbReference type="UCSC" id="T08G11.5">
    <property type="organism name" value="c. elegans"/>
</dbReference>
<dbReference type="AGR" id="WB:WBGene00006765"/>
<dbReference type="CTD" id="172703"/>
<dbReference type="WormBase" id="T08G11.5">
    <property type="protein sequence ID" value="CE13451"/>
    <property type="gene ID" value="WBGene00006765"/>
    <property type="gene designation" value="unc-29"/>
</dbReference>
<dbReference type="eggNOG" id="KOG3645">
    <property type="taxonomic scope" value="Eukaryota"/>
</dbReference>
<dbReference type="HOGENOM" id="CLU_018074_1_0_1"/>
<dbReference type="InParanoid" id="P48181"/>
<dbReference type="OMA" id="RWMMEIP"/>
<dbReference type="OrthoDB" id="5975154at2759"/>
<dbReference type="PhylomeDB" id="P48181"/>
<dbReference type="Reactome" id="R-CEL-629587">
    <property type="pathway name" value="Highly sodium permeable postsynaptic acetylcholine nicotinic receptors"/>
</dbReference>
<dbReference type="Reactome" id="R-CEL-629594">
    <property type="pathway name" value="Highly calcium permeable postsynaptic nicotinic acetylcholine receptors"/>
</dbReference>
<dbReference type="Reactome" id="R-CEL-629597">
    <property type="pathway name" value="Highly calcium permeable nicotinic acetylcholine receptors"/>
</dbReference>
<dbReference type="Reactome" id="R-CEL-6798695">
    <property type="pathway name" value="Neutrophil degranulation"/>
</dbReference>
<dbReference type="SignaLink" id="P48181"/>
<dbReference type="PRO" id="PR:P48181"/>
<dbReference type="Proteomes" id="UP000001940">
    <property type="component" value="Chromosome I"/>
</dbReference>
<dbReference type="Bgee" id="WBGene00006765">
    <property type="expression patterns" value="Expressed in larva and 3 other cell types or tissues"/>
</dbReference>
<dbReference type="GO" id="GO:0005892">
    <property type="term" value="C:acetylcholine-gated channel complex"/>
    <property type="evidence" value="ECO:0000318"/>
    <property type="project" value="GO_Central"/>
</dbReference>
<dbReference type="GO" id="GO:0043005">
    <property type="term" value="C:neuron projection"/>
    <property type="evidence" value="ECO:0000314"/>
    <property type="project" value="WormBase"/>
</dbReference>
<dbReference type="GO" id="GO:0043025">
    <property type="term" value="C:neuronal cell body"/>
    <property type="evidence" value="ECO:0000314"/>
    <property type="project" value="WormBase"/>
</dbReference>
<dbReference type="GO" id="GO:0005886">
    <property type="term" value="C:plasma membrane"/>
    <property type="evidence" value="ECO:0000318"/>
    <property type="project" value="GO_Central"/>
</dbReference>
<dbReference type="GO" id="GO:0045211">
    <property type="term" value="C:postsynaptic membrane"/>
    <property type="evidence" value="ECO:0000314"/>
    <property type="project" value="WormBase"/>
</dbReference>
<dbReference type="GO" id="GO:0045202">
    <property type="term" value="C:synapse"/>
    <property type="evidence" value="ECO:0000314"/>
    <property type="project" value="WormBase"/>
</dbReference>
<dbReference type="GO" id="GO:0022848">
    <property type="term" value="F:acetylcholine-gated monoatomic cation-selective channel activity"/>
    <property type="evidence" value="ECO:0000314"/>
    <property type="project" value="WormBase"/>
</dbReference>
<dbReference type="GO" id="GO:0005231">
    <property type="term" value="F:excitatory extracellular ligand-gated monoatomic ion channel activity"/>
    <property type="evidence" value="ECO:0000318"/>
    <property type="project" value="GO_Central"/>
</dbReference>
<dbReference type="GO" id="GO:0004888">
    <property type="term" value="F:transmembrane signaling receptor activity"/>
    <property type="evidence" value="ECO:0007669"/>
    <property type="project" value="InterPro"/>
</dbReference>
<dbReference type="GO" id="GO:1904315">
    <property type="term" value="F:transmitter-gated monoatomic ion channel activity involved in regulation of postsynaptic membrane potential"/>
    <property type="evidence" value="ECO:0000318"/>
    <property type="project" value="GO_Central"/>
</dbReference>
<dbReference type="GO" id="GO:0007268">
    <property type="term" value="P:chemical synaptic transmission"/>
    <property type="evidence" value="ECO:0000318"/>
    <property type="project" value="GO_Central"/>
</dbReference>
<dbReference type="GO" id="GO:0040011">
    <property type="term" value="P:locomotion"/>
    <property type="evidence" value="ECO:0000315"/>
    <property type="project" value="WormBase"/>
</dbReference>
<dbReference type="GO" id="GO:0034220">
    <property type="term" value="P:monoatomic ion transmembrane transport"/>
    <property type="evidence" value="ECO:0000318"/>
    <property type="project" value="GO_Central"/>
</dbReference>
<dbReference type="GO" id="GO:0007274">
    <property type="term" value="P:neuromuscular synaptic transmission"/>
    <property type="evidence" value="ECO:0000314"/>
    <property type="project" value="WormBase"/>
</dbReference>
<dbReference type="GO" id="GO:0014057">
    <property type="term" value="P:positive regulation of acetylcholine secretion, neurotransmission"/>
    <property type="evidence" value="ECO:0000315"/>
    <property type="project" value="UniProtKB"/>
</dbReference>
<dbReference type="GO" id="GO:0090326">
    <property type="term" value="P:positive regulation of locomotion involved in locomotory behavior"/>
    <property type="evidence" value="ECO:0000315"/>
    <property type="project" value="UniProtKB"/>
</dbReference>
<dbReference type="GO" id="GO:0046662">
    <property type="term" value="P:regulation of egg-laying behavior"/>
    <property type="evidence" value="ECO:0000315"/>
    <property type="project" value="WormBase"/>
</dbReference>
<dbReference type="GO" id="GO:0042391">
    <property type="term" value="P:regulation of membrane potential"/>
    <property type="evidence" value="ECO:0000318"/>
    <property type="project" value="GO_Central"/>
</dbReference>
<dbReference type="GO" id="GO:0006937">
    <property type="term" value="P:regulation of muscle contraction"/>
    <property type="evidence" value="ECO:0000315"/>
    <property type="project" value="UniProtKB"/>
</dbReference>
<dbReference type="GO" id="GO:0043051">
    <property type="term" value="P:regulation of nematode pharyngeal pumping"/>
    <property type="evidence" value="ECO:0000316"/>
    <property type="project" value="WormBase"/>
</dbReference>
<dbReference type="CDD" id="cd19032">
    <property type="entry name" value="LGIC_ECD_nAChR_proto_beta-like"/>
    <property type="match status" value="1"/>
</dbReference>
<dbReference type="CDD" id="cd19064">
    <property type="entry name" value="LGIC_TM_nAChR"/>
    <property type="match status" value="1"/>
</dbReference>
<dbReference type="FunFam" id="1.20.58.390:FF:000035">
    <property type="entry name" value="Acetylcholine receptor subunit beta-like 1"/>
    <property type="match status" value="1"/>
</dbReference>
<dbReference type="FunFam" id="1.20.58.390:FF:000038">
    <property type="entry name" value="Acetylcholine receptor subunit beta-like 1"/>
    <property type="match status" value="1"/>
</dbReference>
<dbReference type="FunFam" id="2.70.170.10:FF:000023">
    <property type="entry name" value="Acetylcholine receptor subunit beta-like 1"/>
    <property type="match status" value="1"/>
</dbReference>
<dbReference type="Gene3D" id="2.70.170.10">
    <property type="entry name" value="Neurotransmitter-gated ion-channel ligand-binding domain"/>
    <property type="match status" value="1"/>
</dbReference>
<dbReference type="Gene3D" id="1.20.58.390">
    <property type="entry name" value="Neurotransmitter-gated ion-channel transmembrane domain"/>
    <property type="match status" value="2"/>
</dbReference>
<dbReference type="InterPro" id="IPR006202">
    <property type="entry name" value="Neur_chan_lig-bd"/>
</dbReference>
<dbReference type="InterPro" id="IPR036734">
    <property type="entry name" value="Neur_chan_lig-bd_sf"/>
</dbReference>
<dbReference type="InterPro" id="IPR006201">
    <property type="entry name" value="Neur_channel"/>
</dbReference>
<dbReference type="InterPro" id="IPR036719">
    <property type="entry name" value="Neuro-gated_channel_TM_sf"/>
</dbReference>
<dbReference type="InterPro" id="IPR038050">
    <property type="entry name" value="Neuro_actylchol_rec"/>
</dbReference>
<dbReference type="InterPro" id="IPR006029">
    <property type="entry name" value="Neurotrans-gated_channel_TM"/>
</dbReference>
<dbReference type="InterPro" id="IPR018000">
    <property type="entry name" value="Neurotransmitter_ion_chnl_CS"/>
</dbReference>
<dbReference type="InterPro" id="IPR002394">
    <property type="entry name" value="Nicotinic_acetylcholine_rcpt"/>
</dbReference>
<dbReference type="NCBIfam" id="TIGR00860">
    <property type="entry name" value="LIC"/>
    <property type="match status" value="1"/>
</dbReference>
<dbReference type="PANTHER" id="PTHR18945">
    <property type="entry name" value="NEUROTRANSMITTER GATED ION CHANNEL"/>
    <property type="match status" value="1"/>
</dbReference>
<dbReference type="Pfam" id="PF02931">
    <property type="entry name" value="Neur_chan_LBD"/>
    <property type="match status" value="1"/>
</dbReference>
<dbReference type="Pfam" id="PF02932">
    <property type="entry name" value="Neur_chan_memb"/>
    <property type="match status" value="1"/>
</dbReference>
<dbReference type="PRINTS" id="PR00254">
    <property type="entry name" value="NICOTINICR"/>
</dbReference>
<dbReference type="PRINTS" id="PR00252">
    <property type="entry name" value="NRIONCHANNEL"/>
</dbReference>
<dbReference type="SUPFAM" id="SSF90112">
    <property type="entry name" value="Neurotransmitter-gated ion-channel transmembrane pore"/>
    <property type="match status" value="1"/>
</dbReference>
<dbReference type="SUPFAM" id="SSF63712">
    <property type="entry name" value="Nicotinic receptor ligand binding domain-like"/>
    <property type="match status" value="1"/>
</dbReference>
<dbReference type="PROSITE" id="PS00236">
    <property type="entry name" value="NEUROTR_ION_CHANNEL"/>
    <property type="match status" value="1"/>
</dbReference>
<organism>
    <name type="scientific">Caenorhabditis elegans</name>
    <dbReference type="NCBI Taxonomy" id="6239"/>
    <lineage>
        <taxon>Eukaryota</taxon>
        <taxon>Metazoa</taxon>
        <taxon>Ecdysozoa</taxon>
        <taxon>Nematoda</taxon>
        <taxon>Chromadorea</taxon>
        <taxon>Rhabditida</taxon>
        <taxon>Rhabditina</taxon>
        <taxon>Rhabditomorpha</taxon>
        <taxon>Rhabditoidea</taxon>
        <taxon>Rhabditidae</taxon>
        <taxon>Peloderinae</taxon>
        <taxon>Caenorhabditis</taxon>
    </lineage>
</organism>
<proteinExistence type="evidence at protein level"/>
<reference key="1">
    <citation type="journal article" date="1996" name="J. Mol. Biol.">
        <title>Nicotinic acetylcholine receptors in the nematode Caenorhabditis elegans.</title>
        <authorList>
            <person name="Ballivet M."/>
            <person name="Alliod C."/>
            <person name="Bertrand S."/>
            <person name="Bertrand D."/>
        </authorList>
    </citation>
    <scope>NUCLEOTIDE SEQUENCE [MRNA]</scope>
    <source>
        <strain>Bristol N2</strain>
    </source>
</reference>
<reference key="2">
    <citation type="journal article" date="1997" name="J. Neurosci.">
        <title>Caenorhabditis elegans levamisole resistance genes lev-1, unc-29, and unc-38 encode functional nicotinic acetylcholine receptor subunits.</title>
        <authorList>
            <person name="Fleming J.T."/>
            <person name="Squire M.D."/>
            <person name="Barnes T.M."/>
            <person name="Tornoe C."/>
            <person name="Matsuda K."/>
            <person name="Ahnn J."/>
            <person name="Fire A."/>
            <person name="Sulston J.E."/>
            <person name="Barnard E.A."/>
            <person name="Sattelle D.B."/>
            <person name="Lewis J.A."/>
        </authorList>
    </citation>
    <scope>NUCLEOTIDE SEQUENCE [GENOMIC DNA]</scope>
    <source>
        <strain>Bristol N2</strain>
    </source>
</reference>
<reference key="3">
    <citation type="journal article" date="1998" name="Science">
        <title>Genome sequence of the nematode C. elegans: a platform for investigating biology.</title>
        <authorList>
            <consortium name="The C. elegans sequencing consortium"/>
        </authorList>
    </citation>
    <scope>NUCLEOTIDE SEQUENCE [LARGE SCALE GENOMIC DNA]</scope>
    <source>
        <strain>Bristol N2</strain>
    </source>
</reference>
<reference key="4">
    <citation type="journal article" date="2005" name="EMBO J.">
        <title>Identification and characterization of novel nicotinic receptor-associated proteins in Caenorhabditis elegans.</title>
        <authorList>
            <person name="Gottschalk A."/>
            <person name="Almedom R.B."/>
            <person name="Schedletzky T."/>
            <person name="Anderson S.D."/>
            <person name="Yates J.R. III"/>
            <person name="Schafer W.R."/>
        </authorList>
    </citation>
    <scope>FUNCTION</scope>
    <scope>INTERACTION WITH LEV-1</scope>
    <scope>SUBCELLULAR LOCATION</scope>
    <scope>DISRUPTION PHENOTYPE</scope>
</reference>
<reference key="5">
    <citation type="journal article" date="2011" name="EMBO J.">
        <title>A single immunoglobulin-domain protein required for clustering acetylcholine receptors in C. elegans.</title>
        <authorList>
            <person name="Rapti G."/>
            <person name="Richmond J."/>
            <person name="Bessereau J.L."/>
        </authorList>
    </citation>
    <scope>INTERACTION WITH OIG-4</scope>
</reference>
<reference key="6">
    <citation type="journal article" date="2018" name="Elife">
        <title>CRELD1 is an evolutionarily-conserved maturational enhancer of ionotropic acetylcholine receptors.</title>
        <authorList>
            <person name="D'Alessandro M."/>
            <person name="Richard M."/>
            <person name="Stigloher C."/>
            <person name="Gache V."/>
            <person name="Boulin T."/>
            <person name="Richmond J.E."/>
            <person name="Bessereau J.L."/>
        </authorList>
    </citation>
    <scope>INTERACTION WITH CRLD-1</scope>
</reference>
<protein>
    <recommendedName>
        <fullName>Acetylcholine receptor subunit beta-type unc-29</fullName>
    </recommendedName>
    <alternativeName>
        <fullName>Uncoordinated protein 29</fullName>
    </alternativeName>
</protein>
<keyword id="KW-1003">Cell membrane</keyword>
<keyword id="KW-1015">Disulfide bond</keyword>
<keyword id="KW-0325">Glycoprotein</keyword>
<keyword id="KW-0407">Ion channel</keyword>
<keyword id="KW-0406">Ion transport</keyword>
<keyword id="KW-1071">Ligand-gated ion channel</keyword>
<keyword id="KW-0472">Membrane</keyword>
<keyword id="KW-0628">Postsynaptic cell membrane</keyword>
<keyword id="KW-0675">Receptor</keyword>
<keyword id="KW-1185">Reference proteome</keyword>
<keyword id="KW-0732">Signal</keyword>
<keyword id="KW-0770">Synapse</keyword>
<keyword id="KW-0812">Transmembrane</keyword>
<keyword id="KW-1133">Transmembrane helix</keyword>
<keyword id="KW-0813">Transport</keyword>
<feature type="signal peptide" evidence="2">
    <location>
        <begin position="1"/>
        <end position="26"/>
    </location>
</feature>
<feature type="chain" id="PRO_0000000396" description="Acetylcholine receptor subunit beta-type unc-29">
    <location>
        <begin position="27"/>
        <end position="493"/>
    </location>
</feature>
<feature type="topological domain" description="Extracellular" evidence="2">
    <location>
        <begin position="27"/>
        <end position="232"/>
    </location>
</feature>
<feature type="transmembrane region" description="Helical" evidence="2">
    <location>
        <begin position="233"/>
        <end position="254"/>
    </location>
</feature>
<feature type="transmembrane region" description="Helical" evidence="2">
    <location>
        <begin position="262"/>
        <end position="280"/>
    </location>
</feature>
<feature type="transmembrane region" description="Helical" evidence="2">
    <location>
        <begin position="296"/>
        <end position="317"/>
    </location>
</feature>
<feature type="topological domain" description="Cytoplasmic" evidence="2">
    <location>
        <begin position="318"/>
        <end position="445"/>
    </location>
</feature>
<feature type="transmembrane region" description="Helical" evidence="2">
    <location>
        <begin position="446"/>
        <end position="466"/>
    </location>
</feature>
<feature type="glycosylation site" description="N-linked (GlcNAc...) asparagine" evidence="2">
    <location>
        <position position="25"/>
    </location>
</feature>
<feature type="glycosylation site" description="N-linked (GlcNAc...) asparagine" evidence="2">
    <location>
        <position position="50"/>
    </location>
</feature>
<feature type="disulfide bond" evidence="1">
    <location>
        <begin position="155"/>
        <end position="169"/>
    </location>
</feature>
<feature type="sequence conflict" description="In Ref. 1; CAA58765." evidence="6" ref="1">
    <original>S</original>
    <variation>T</variation>
    <location>
        <position position="355"/>
    </location>
</feature>
<evidence type="ECO:0000250" key="1"/>
<evidence type="ECO:0000255" key="2"/>
<evidence type="ECO:0000269" key="3">
    <source>
    </source>
</evidence>
<evidence type="ECO:0000269" key="4">
    <source>
    </source>
</evidence>
<evidence type="ECO:0000269" key="5">
    <source>
    </source>
</evidence>
<evidence type="ECO:0000305" key="6"/>
<evidence type="ECO:0000312" key="7">
    <source>
        <dbReference type="WormBase" id="T08G11.5"/>
    </source>
</evidence>